<organism>
    <name type="scientific">Protochlamydia amoebophila (strain UWE25)</name>
    <dbReference type="NCBI Taxonomy" id="264201"/>
    <lineage>
        <taxon>Bacteria</taxon>
        <taxon>Pseudomonadati</taxon>
        <taxon>Chlamydiota</taxon>
        <taxon>Chlamydiia</taxon>
        <taxon>Parachlamydiales</taxon>
        <taxon>Parachlamydiaceae</taxon>
        <taxon>Candidatus Protochlamydia</taxon>
    </lineage>
</organism>
<dbReference type="EMBL" id="BX908798">
    <property type="protein sequence ID" value="CAF23326.1"/>
    <property type="molecule type" value="Genomic_DNA"/>
</dbReference>
<dbReference type="RefSeq" id="WP_011175152.1">
    <property type="nucleotide sequence ID" value="NC_005861.2"/>
</dbReference>
<dbReference type="SMR" id="Q6MDM3"/>
<dbReference type="STRING" id="264201.pc0602"/>
<dbReference type="KEGG" id="pcu:PC_RS02885"/>
<dbReference type="eggNOG" id="COG0244">
    <property type="taxonomic scope" value="Bacteria"/>
</dbReference>
<dbReference type="HOGENOM" id="CLU_092227_1_2_0"/>
<dbReference type="OrthoDB" id="18754at2"/>
<dbReference type="Proteomes" id="UP000000529">
    <property type="component" value="Chromosome"/>
</dbReference>
<dbReference type="GO" id="GO:1990904">
    <property type="term" value="C:ribonucleoprotein complex"/>
    <property type="evidence" value="ECO:0007669"/>
    <property type="project" value="UniProtKB-KW"/>
</dbReference>
<dbReference type="GO" id="GO:0005840">
    <property type="term" value="C:ribosome"/>
    <property type="evidence" value="ECO:0007669"/>
    <property type="project" value="UniProtKB-KW"/>
</dbReference>
<dbReference type="GO" id="GO:0070180">
    <property type="term" value="F:large ribosomal subunit rRNA binding"/>
    <property type="evidence" value="ECO:0007669"/>
    <property type="project" value="UniProtKB-UniRule"/>
</dbReference>
<dbReference type="GO" id="GO:0006412">
    <property type="term" value="P:translation"/>
    <property type="evidence" value="ECO:0007669"/>
    <property type="project" value="UniProtKB-UniRule"/>
</dbReference>
<dbReference type="CDD" id="cd05797">
    <property type="entry name" value="Ribosomal_L10"/>
    <property type="match status" value="1"/>
</dbReference>
<dbReference type="Gene3D" id="3.30.70.1730">
    <property type="match status" value="1"/>
</dbReference>
<dbReference type="Gene3D" id="6.10.250.290">
    <property type="match status" value="1"/>
</dbReference>
<dbReference type="HAMAP" id="MF_00362">
    <property type="entry name" value="Ribosomal_uL10"/>
    <property type="match status" value="1"/>
</dbReference>
<dbReference type="InterPro" id="IPR001790">
    <property type="entry name" value="Ribosomal_uL10"/>
</dbReference>
<dbReference type="InterPro" id="IPR043141">
    <property type="entry name" value="Ribosomal_uL10-like_sf"/>
</dbReference>
<dbReference type="InterPro" id="IPR022973">
    <property type="entry name" value="Ribosomal_uL10_bac"/>
</dbReference>
<dbReference type="InterPro" id="IPR047865">
    <property type="entry name" value="Ribosomal_uL10_bac_type"/>
</dbReference>
<dbReference type="NCBIfam" id="NF000955">
    <property type="entry name" value="PRK00099.1-1"/>
    <property type="match status" value="1"/>
</dbReference>
<dbReference type="PANTHER" id="PTHR11560">
    <property type="entry name" value="39S RIBOSOMAL PROTEIN L10, MITOCHONDRIAL"/>
    <property type="match status" value="1"/>
</dbReference>
<dbReference type="Pfam" id="PF00466">
    <property type="entry name" value="Ribosomal_L10"/>
    <property type="match status" value="1"/>
</dbReference>
<dbReference type="SUPFAM" id="SSF160369">
    <property type="entry name" value="Ribosomal protein L10-like"/>
    <property type="match status" value="1"/>
</dbReference>
<name>RL10_PARUW</name>
<comment type="function">
    <text evidence="1">Forms part of the ribosomal stalk, playing a central role in the interaction of the ribosome with GTP-bound translation factors.</text>
</comment>
<comment type="subunit">
    <text evidence="1">Part of the ribosomal stalk of the 50S ribosomal subunit. The N-terminus interacts with L11 and the large rRNA to form the base of the stalk. The C-terminus forms an elongated spine to which L12 dimers bind in a sequential fashion forming a multimeric L10(L12)X complex.</text>
</comment>
<comment type="similarity">
    <text evidence="1">Belongs to the universal ribosomal protein uL10 family.</text>
</comment>
<accession>Q6MDM3</accession>
<feature type="chain" id="PRO_0000154681" description="Large ribosomal subunit protein uL10">
    <location>
        <begin position="1"/>
        <end position="181"/>
    </location>
</feature>
<evidence type="ECO:0000255" key="1">
    <source>
        <dbReference type="HAMAP-Rule" id="MF_00362"/>
    </source>
</evidence>
<evidence type="ECO:0000305" key="2"/>
<proteinExistence type="inferred from homology"/>
<gene>
    <name evidence="1" type="primary">rplJ</name>
    <name type="ordered locus">pc0602</name>
</gene>
<protein>
    <recommendedName>
        <fullName evidence="1">Large ribosomal subunit protein uL10</fullName>
    </recommendedName>
    <alternativeName>
        <fullName evidence="2">50S ribosomal protein L10</fullName>
    </alternativeName>
</protein>
<sequence length="181" mass="20033">MREEKQLLKQEIIDKIQRYPAFVIMQYAGLTANQANDFRRQLGKIGGDVEVVRKRVLLKAAKDAGLELDVSSLNGHIGLVFLGEDPIEATKTVFKFSQEREKIIQVLGGRFDGQIYSGDDVEKLSKLPSKDEMRAQFLSTLEAPMAQTLAVVEALLASVAYCLDNKSKQGSEEPENSASEA</sequence>
<keyword id="KW-1185">Reference proteome</keyword>
<keyword id="KW-0687">Ribonucleoprotein</keyword>
<keyword id="KW-0689">Ribosomal protein</keyword>
<keyword id="KW-0694">RNA-binding</keyword>
<keyword id="KW-0699">rRNA-binding</keyword>
<reference key="1">
    <citation type="journal article" date="2004" name="Science">
        <title>Illuminating the evolutionary history of chlamydiae.</title>
        <authorList>
            <person name="Horn M."/>
            <person name="Collingro A."/>
            <person name="Schmitz-Esser S."/>
            <person name="Beier C.L."/>
            <person name="Purkhold U."/>
            <person name="Fartmann B."/>
            <person name="Brandt P."/>
            <person name="Nyakatura G.J."/>
            <person name="Droege M."/>
            <person name="Frishman D."/>
            <person name="Rattei T."/>
            <person name="Mewes H.-W."/>
            <person name="Wagner M."/>
        </authorList>
    </citation>
    <scope>NUCLEOTIDE SEQUENCE [LARGE SCALE GENOMIC DNA]</scope>
    <source>
        <strain>UWE25</strain>
    </source>
</reference>